<reference key="1">
    <citation type="submission" date="1997-10" db="EMBL/GenBank/DDBJ databases">
        <title>Neurospora crassa MSH2, a MutS homolog.</title>
        <authorList>
            <person name="Huber D.H."/>
            <person name="Hausner G."/>
            <person name="Yamamoto K."/>
            <person name="Ishii C."/>
            <person name="Seidel-Rogol B.L."/>
            <person name="Bertrand H."/>
        </authorList>
    </citation>
    <scope>NUCLEOTIDE SEQUENCE [GENOMIC DNA]</scope>
    <source>
        <strain>74-OR23-1VA / FGSC 2489</strain>
    </source>
</reference>
<reference key="2">
    <citation type="journal article" date="2003" name="Nature">
        <title>The genome sequence of the filamentous fungus Neurospora crassa.</title>
        <authorList>
            <person name="Galagan J.E."/>
            <person name="Calvo S.E."/>
            <person name="Borkovich K.A."/>
            <person name="Selker E.U."/>
            <person name="Read N.D."/>
            <person name="Jaffe D.B."/>
            <person name="FitzHugh W."/>
            <person name="Ma L.-J."/>
            <person name="Smirnov S."/>
            <person name="Purcell S."/>
            <person name="Rehman B."/>
            <person name="Elkins T."/>
            <person name="Engels R."/>
            <person name="Wang S."/>
            <person name="Nielsen C.B."/>
            <person name="Butler J."/>
            <person name="Endrizzi M."/>
            <person name="Qui D."/>
            <person name="Ianakiev P."/>
            <person name="Bell-Pedersen D."/>
            <person name="Nelson M.A."/>
            <person name="Werner-Washburne M."/>
            <person name="Selitrennikoff C.P."/>
            <person name="Kinsey J.A."/>
            <person name="Braun E.L."/>
            <person name="Zelter A."/>
            <person name="Schulte U."/>
            <person name="Kothe G.O."/>
            <person name="Jedd G."/>
            <person name="Mewes H.-W."/>
            <person name="Staben C."/>
            <person name="Marcotte E."/>
            <person name="Greenberg D."/>
            <person name="Roy A."/>
            <person name="Foley K."/>
            <person name="Naylor J."/>
            <person name="Stange-Thomann N."/>
            <person name="Barrett R."/>
            <person name="Gnerre S."/>
            <person name="Kamal M."/>
            <person name="Kamvysselis M."/>
            <person name="Mauceli E.W."/>
            <person name="Bielke C."/>
            <person name="Rudd S."/>
            <person name="Frishman D."/>
            <person name="Krystofova S."/>
            <person name="Rasmussen C."/>
            <person name="Metzenberg R.L."/>
            <person name="Perkins D.D."/>
            <person name="Kroken S."/>
            <person name="Cogoni C."/>
            <person name="Macino G."/>
            <person name="Catcheside D.E.A."/>
            <person name="Li W."/>
            <person name="Pratt R.J."/>
            <person name="Osmani S.A."/>
            <person name="DeSouza C.P.C."/>
            <person name="Glass N.L."/>
            <person name="Orbach M.J."/>
            <person name="Berglund J.A."/>
            <person name="Voelker R."/>
            <person name="Yarden O."/>
            <person name="Plamann M."/>
            <person name="Seiler S."/>
            <person name="Dunlap J.C."/>
            <person name="Radford A."/>
            <person name="Aramayo R."/>
            <person name="Natvig D.O."/>
            <person name="Alex L.A."/>
            <person name="Mannhaupt G."/>
            <person name="Ebbole D.J."/>
            <person name="Freitag M."/>
            <person name="Paulsen I."/>
            <person name="Sachs M.S."/>
            <person name="Lander E.S."/>
            <person name="Nusbaum C."/>
            <person name="Birren B.W."/>
        </authorList>
    </citation>
    <scope>NUCLEOTIDE SEQUENCE [LARGE SCALE GENOMIC DNA]</scope>
    <source>
        <strain>ATCC 24698 / 74-OR23-1A / CBS 708.71 / DSM 1257 / FGSC 987</strain>
    </source>
</reference>
<dbReference type="EMBL" id="AF030634">
    <property type="protein sequence ID" value="AAB84225.1"/>
    <property type="molecule type" value="Genomic_DNA"/>
</dbReference>
<dbReference type="EMBL" id="CM002242">
    <property type="protein sequence ID" value="EAA30407.1"/>
    <property type="molecule type" value="Genomic_DNA"/>
</dbReference>
<dbReference type="RefSeq" id="XP_959643.1">
    <property type="nucleotide sequence ID" value="XM_954550.2"/>
</dbReference>
<dbReference type="SMR" id="O13396"/>
<dbReference type="FunCoup" id="O13396">
    <property type="interactions" value="1045"/>
</dbReference>
<dbReference type="STRING" id="367110.O13396"/>
<dbReference type="PaxDb" id="5141-EFNCRP00000003090"/>
<dbReference type="EnsemblFungi" id="EAA30407">
    <property type="protein sequence ID" value="EAA30407"/>
    <property type="gene ID" value="NCU02230"/>
</dbReference>
<dbReference type="GeneID" id="3875790"/>
<dbReference type="KEGG" id="ncr:NCU02230"/>
<dbReference type="VEuPathDB" id="FungiDB:NCU02230"/>
<dbReference type="HOGENOM" id="CLU_002472_10_0_1"/>
<dbReference type="InParanoid" id="O13396"/>
<dbReference type="OMA" id="LVRFPQK"/>
<dbReference type="OrthoDB" id="295033at2759"/>
<dbReference type="Proteomes" id="UP000001805">
    <property type="component" value="Chromosome 7, Linkage Group VII"/>
</dbReference>
<dbReference type="GO" id="GO:0032301">
    <property type="term" value="C:MutSalpha complex"/>
    <property type="evidence" value="ECO:0000318"/>
    <property type="project" value="GO_Central"/>
</dbReference>
<dbReference type="GO" id="GO:0005634">
    <property type="term" value="C:nucleus"/>
    <property type="evidence" value="ECO:0000318"/>
    <property type="project" value="GO_Central"/>
</dbReference>
<dbReference type="GO" id="GO:0005524">
    <property type="term" value="F:ATP binding"/>
    <property type="evidence" value="ECO:0007669"/>
    <property type="project" value="UniProtKB-KW"/>
</dbReference>
<dbReference type="GO" id="GO:0140664">
    <property type="term" value="F:ATP-dependent DNA damage sensor activity"/>
    <property type="evidence" value="ECO:0007669"/>
    <property type="project" value="InterPro"/>
</dbReference>
<dbReference type="GO" id="GO:0030983">
    <property type="term" value="F:mismatched DNA binding"/>
    <property type="evidence" value="ECO:0000318"/>
    <property type="project" value="GO_Central"/>
</dbReference>
<dbReference type="GO" id="GO:0006298">
    <property type="term" value="P:mismatch repair"/>
    <property type="evidence" value="ECO:0000318"/>
    <property type="project" value="GO_Central"/>
</dbReference>
<dbReference type="GO" id="GO:0006312">
    <property type="term" value="P:mitotic recombination"/>
    <property type="evidence" value="ECO:0000318"/>
    <property type="project" value="GO_Central"/>
</dbReference>
<dbReference type="CDD" id="cd03285">
    <property type="entry name" value="ABC_MSH2_euk"/>
    <property type="match status" value="1"/>
</dbReference>
<dbReference type="FunFam" id="3.30.420.110:FF:000002">
    <property type="entry name" value="DNA mismatch repair protein"/>
    <property type="match status" value="1"/>
</dbReference>
<dbReference type="FunFam" id="3.40.1170.10:FF:000003">
    <property type="entry name" value="DNA mismatch repair protein"/>
    <property type="match status" value="1"/>
</dbReference>
<dbReference type="FunFam" id="3.40.50.300:FF:000523">
    <property type="entry name" value="DNA mismatch repair protein"/>
    <property type="match status" value="1"/>
</dbReference>
<dbReference type="FunFam" id="1.10.1420.10:FF:000015">
    <property type="entry name" value="DNA mismatch repair protein Msh2"/>
    <property type="match status" value="1"/>
</dbReference>
<dbReference type="FunFam" id="1.10.1420.10:FF:000017">
    <property type="entry name" value="DNA mismatch repair protein Msh2"/>
    <property type="match status" value="1"/>
</dbReference>
<dbReference type="Gene3D" id="1.10.1420.10">
    <property type="match status" value="2"/>
</dbReference>
<dbReference type="Gene3D" id="3.40.1170.10">
    <property type="entry name" value="DNA repair protein MutS, domain I"/>
    <property type="match status" value="1"/>
</dbReference>
<dbReference type="Gene3D" id="3.30.420.110">
    <property type="entry name" value="MutS, connector domain"/>
    <property type="match status" value="1"/>
</dbReference>
<dbReference type="Gene3D" id="3.40.50.300">
    <property type="entry name" value="P-loop containing nucleotide triphosphate hydrolases"/>
    <property type="match status" value="1"/>
</dbReference>
<dbReference type="InterPro" id="IPR011184">
    <property type="entry name" value="DNA_mismatch_repair_Msh2"/>
</dbReference>
<dbReference type="InterPro" id="IPR007695">
    <property type="entry name" value="DNA_mismatch_repair_MutS-lik_N"/>
</dbReference>
<dbReference type="InterPro" id="IPR000432">
    <property type="entry name" value="DNA_mismatch_repair_MutS_C"/>
</dbReference>
<dbReference type="InterPro" id="IPR007861">
    <property type="entry name" value="DNA_mismatch_repair_MutS_clamp"/>
</dbReference>
<dbReference type="InterPro" id="IPR007696">
    <property type="entry name" value="DNA_mismatch_repair_MutS_core"/>
</dbReference>
<dbReference type="InterPro" id="IPR016151">
    <property type="entry name" value="DNA_mismatch_repair_MutS_N"/>
</dbReference>
<dbReference type="InterPro" id="IPR036187">
    <property type="entry name" value="DNA_mismatch_repair_MutS_sf"/>
</dbReference>
<dbReference type="InterPro" id="IPR007860">
    <property type="entry name" value="DNA_mmatch_repair_MutS_con_dom"/>
</dbReference>
<dbReference type="InterPro" id="IPR032642">
    <property type="entry name" value="Msh2_ATP-bd"/>
</dbReference>
<dbReference type="InterPro" id="IPR045076">
    <property type="entry name" value="MutS"/>
</dbReference>
<dbReference type="InterPro" id="IPR036678">
    <property type="entry name" value="MutS_con_dom_sf"/>
</dbReference>
<dbReference type="InterPro" id="IPR027417">
    <property type="entry name" value="P-loop_NTPase"/>
</dbReference>
<dbReference type="NCBIfam" id="NF003810">
    <property type="entry name" value="PRK05399.1"/>
    <property type="match status" value="1"/>
</dbReference>
<dbReference type="PANTHER" id="PTHR11361:SF35">
    <property type="entry name" value="DNA MISMATCH REPAIR PROTEIN MSH2"/>
    <property type="match status" value="1"/>
</dbReference>
<dbReference type="PANTHER" id="PTHR11361">
    <property type="entry name" value="DNA MISMATCH REPAIR PROTEIN MUTS FAMILY MEMBER"/>
    <property type="match status" value="1"/>
</dbReference>
<dbReference type="Pfam" id="PF01624">
    <property type="entry name" value="MutS_I"/>
    <property type="match status" value="1"/>
</dbReference>
<dbReference type="Pfam" id="PF05188">
    <property type="entry name" value="MutS_II"/>
    <property type="match status" value="1"/>
</dbReference>
<dbReference type="Pfam" id="PF05192">
    <property type="entry name" value="MutS_III"/>
    <property type="match status" value="1"/>
</dbReference>
<dbReference type="Pfam" id="PF05190">
    <property type="entry name" value="MutS_IV"/>
    <property type="match status" value="1"/>
</dbReference>
<dbReference type="Pfam" id="PF00488">
    <property type="entry name" value="MutS_V"/>
    <property type="match status" value="1"/>
</dbReference>
<dbReference type="PIRSF" id="PIRSF005813">
    <property type="entry name" value="MSH2"/>
    <property type="match status" value="1"/>
</dbReference>
<dbReference type="SMART" id="SM00534">
    <property type="entry name" value="MUTSac"/>
    <property type="match status" value="1"/>
</dbReference>
<dbReference type="SMART" id="SM00533">
    <property type="entry name" value="MUTSd"/>
    <property type="match status" value="1"/>
</dbReference>
<dbReference type="SUPFAM" id="SSF48334">
    <property type="entry name" value="DNA repair protein MutS, domain III"/>
    <property type="match status" value="1"/>
</dbReference>
<dbReference type="SUPFAM" id="SSF52540">
    <property type="entry name" value="P-loop containing nucleoside triphosphate hydrolases"/>
    <property type="match status" value="1"/>
</dbReference>
<dbReference type="PROSITE" id="PS00486">
    <property type="entry name" value="DNA_MISMATCH_REPAIR_2"/>
    <property type="match status" value="1"/>
</dbReference>
<proteinExistence type="inferred from homology"/>
<name>MSH2_NEUCR</name>
<sequence>MSSRPELKVDDEHGFIRFYKSLPQLGEEAIRIFDRGDWYTAHGDDATFIARTVYKTTSVIRQLGRSDHTGLPSVTMTVTVFRQFLREALFKLGKRIEIWASPSGRMNWKVVKQASPGNLQDVEDELGGQFEGAPVILAVKISAKASEARTVGVCFADASVRELGVSEFLDNDLYSNFEALLIQLGVKECIVTQDKGEKEKDPELAKLRQIIDNCGVAIAERSAGEFGTKDIEQDLSRLLKDERAASLLPQTDLKLAMGSASALIKYLGILHDPSNFGQYQLYQHDLAQFMKLDAAALKALNLMPGARDGAKNMSLYGLLNHCKTPVGSRLLSQWLKQPLMNAEEIEKRQQLVEAFANDTELRQSMQEEHLRSIPDLYRLSKRFQRGKATLEDVVRAYQVVIRLPGFIGTLEGVMDEAYRDPLDEVYTNKLRELSDSLVKLQEMVETTVDLDALDNHEFIIKPEFDDSLRIIRKKLDRLRTDMDNEFAEAAEDLGQEREKKIFLENHKVHGWCMRLTRTEAGCIRNNSRYLECSTQKNGVYFTTKTLQALRREFDQLSQNYNRTQSSLVNEVVGVAASYCPVLERLAAVLAHLDVIVSFAHCSVHAPISYVRPKIHPRGTGRTVLTEARHPCMEVQDDVTFITNDVTLTREDSSFLIITGPNMGGKSTYIRQIGVIALMAQIGCFVPCSSAELTIFDSILARVGASDSQLKGVSTFMAEMLETANILKSATAESLIIIDELGRGTSTYDGFGLAWAISEHIVKEIGCFALFATHFHELTALADQYPNVKNLHVTAHISGTDTDTDVITDEDEKAKKKREVTLLYKVEPGICDQSFGIHVAELVRFPDKVVRMAKRKADELEDFTSKHEEENGGGLGVQYSKQDVEEGSALLKDVLVKWKDEVKSGRMSKEEMVARLKELVQKDERLLGNPFFKSVQAL</sequence>
<keyword id="KW-0067">ATP-binding</keyword>
<keyword id="KW-0227">DNA damage</keyword>
<keyword id="KW-0234">DNA repair</keyword>
<keyword id="KW-0238">DNA-binding</keyword>
<keyword id="KW-0547">Nucleotide-binding</keyword>
<keyword id="KW-0539">Nucleus</keyword>
<keyword id="KW-1185">Reference proteome</keyword>
<comment type="function">
    <text evidence="1">Involved in post-replicative DNA-mismatch repair. Binds to mismatch-containing DNA (By similarity).</text>
</comment>
<comment type="subunit">
    <text evidence="1">Heterodimer of msh2 and msh6.</text>
</comment>
<comment type="subcellular location">
    <subcellularLocation>
        <location evidence="3">Nucleus</location>
    </subcellularLocation>
</comment>
<comment type="similarity">
    <text evidence="3">Belongs to the DNA mismatch repair MutS family.</text>
</comment>
<feature type="chain" id="PRO_0000115189" description="DNA mismatch repair protein msh-2">
    <location>
        <begin position="1"/>
        <end position="937"/>
    </location>
</feature>
<feature type="binding site" evidence="2">
    <location>
        <begin position="659"/>
        <end position="666"/>
    </location>
    <ligand>
        <name>ATP</name>
        <dbReference type="ChEBI" id="CHEBI:30616"/>
    </ligand>
</feature>
<accession>O13396</accession>
<accession>Q7RVA5</accession>
<evidence type="ECO:0000250" key="1"/>
<evidence type="ECO:0000255" key="2"/>
<evidence type="ECO:0000305" key="3"/>
<gene>
    <name type="primary">msh-2</name>
    <name type="synonym">msh2</name>
    <name type="ORF">NCU02230</name>
</gene>
<organism>
    <name type="scientific">Neurospora crassa (strain ATCC 24698 / 74-OR23-1A / CBS 708.71 / DSM 1257 / FGSC 987)</name>
    <dbReference type="NCBI Taxonomy" id="367110"/>
    <lineage>
        <taxon>Eukaryota</taxon>
        <taxon>Fungi</taxon>
        <taxon>Dikarya</taxon>
        <taxon>Ascomycota</taxon>
        <taxon>Pezizomycotina</taxon>
        <taxon>Sordariomycetes</taxon>
        <taxon>Sordariomycetidae</taxon>
        <taxon>Sordariales</taxon>
        <taxon>Sordariaceae</taxon>
        <taxon>Neurospora</taxon>
    </lineage>
</organism>
<protein>
    <recommendedName>
        <fullName>DNA mismatch repair protein msh-2</fullName>
    </recommendedName>
</protein>